<evidence type="ECO:0000250" key="1">
    <source>
        <dbReference type="UniProtKB" id="C0HK39"/>
    </source>
</evidence>
<evidence type="ECO:0000255" key="2">
    <source>
        <dbReference type="PROSITE-ProRule" id="PRU00395"/>
    </source>
</evidence>
<evidence type="ECO:0000269" key="3">
    <source>
    </source>
</evidence>
<evidence type="ECO:0000303" key="4">
    <source>
    </source>
</evidence>
<evidence type="ECO:0000305" key="5"/>
<reference evidence="5" key="1">
    <citation type="journal article" date="2020" name="J. Biol. Chem.">
        <title>Discovery and mechanistic studies of cytotoxic cyclotides from the medicinal herb Hybanthus enneaspermus.</title>
        <authorList>
            <person name="Du Q."/>
            <person name="Chan L.Y."/>
            <person name="Gilding E.K."/>
            <person name="Henriques S.T."/>
            <person name="Condon N.D."/>
            <person name="Ravipati A.S."/>
            <person name="Kaas Q."/>
            <person name="Huang Y.H."/>
            <person name="Craik D.J."/>
        </authorList>
    </citation>
    <scope>PROTEIN SEQUENCE</scope>
    <scope>MASS SPECTROMETRY</scope>
    <scope>TISSUE SPECIFICITY</scope>
    <scope>DISULFIDE BONDS</scope>
</reference>
<sequence length="30" mass="3171">GLPCGESCVYIPCISTVLGCSCSNKVCYRD</sequence>
<feature type="peptide" id="PRO_0000450763" description="Cyclotide hyen-G" evidence="2">
    <location>
        <begin position="1"/>
        <end position="30"/>
    </location>
</feature>
<feature type="disulfide bond" evidence="2 3">
    <location>
        <begin position="4"/>
        <end position="20"/>
    </location>
</feature>
<feature type="disulfide bond" evidence="2 3">
    <location>
        <begin position="8"/>
        <end position="22"/>
    </location>
</feature>
<feature type="disulfide bond" evidence="2 3">
    <location>
        <begin position="13"/>
        <end position="27"/>
    </location>
</feature>
<feature type="cross-link" description="Cyclopeptide (Gly-Asp)" evidence="1">
    <location>
        <begin position="1"/>
        <end position="30"/>
    </location>
</feature>
<name>CYHEG_PIGEN</name>
<protein>
    <recommendedName>
        <fullName evidence="4">Cyclotide hyen-G</fullName>
    </recommendedName>
</protein>
<dbReference type="SMR" id="C0HLP1"/>
<dbReference type="GO" id="GO:0051715">
    <property type="term" value="P:cytolysis in another organism"/>
    <property type="evidence" value="ECO:0000314"/>
    <property type="project" value="UniProtKB"/>
</dbReference>
<dbReference type="GO" id="GO:0006952">
    <property type="term" value="P:defense response"/>
    <property type="evidence" value="ECO:0000314"/>
    <property type="project" value="UniProtKB"/>
</dbReference>
<dbReference type="InterPro" id="IPR005535">
    <property type="entry name" value="Cyclotide"/>
</dbReference>
<dbReference type="InterPro" id="IPR012323">
    <property type="entry name" value="Cyclotide_bracelet_CS"/>
</dbReference>
<dbReference type="InterPro" id="IPR036146">
    <property type="entry name" value="Cyclotide_sf"/>
</dbReference>
<dbReference type="Pfam" id="PF03784">
    <property type="entry name" value="Cyclotide"/>
    <property type="match status" value="1"/>
</dbReference>
<dbReference type="PIRSF" id="PIRSF037891">
    <property type="entry name" value="Cycloviolacin"/>
    <property type="match status" value="1"/>
</dbReference>
<dbReference type="SUPFAM" id="SSF57038">
    <property type="entry name" value="Cyclotides"/>
    <property type="match status" value="1"/>
</dbReference>
<dbReference type="PROSITE" id="PS51052">
    <property type="entry name" value="CYCLOTIDE"/>
    <property type="match status" value="1"/>
</dbReference>
<dbReference type="PROSITE" id="PS60008">
    <property type="entry name" value="CYCLOTIDE_BRACELET"/>
    <property type="match status" value="1"/>
</dbReference>
<proteinExistence type="evidence at protein level"/>
<accession>C0HLP1</accession>
<organism evidence="4">
    <name type="scientific">Pigea enneasperma</name>
    <name type="common">Spade flower</name>
    <name type="synonym">Afrohybanthus enneaspermus</name>
    <dbReference type="NCBI Taxonomy" id="212266"/>
    <lineage>
        <taxon>Eukaryota</taxon>
        <taxon>Viridiplantae</taxon>
        <taxon>Streptophyta</taxon>
        <taxon>Embryophyta</taxon>
        <taxon>Tracheophyta</taxon>
        <taxon>Spermatophyta</taxon>
        <taxon>Magnoliopsida</taxon>
        <taxon>eudicotyledons</taxon>
        <taxon>Gunneridae</taxon>
        <taxon>Pentapetalae</taxon>
        <taxon>rosids</taxon>
        <taxon>fabids</taxon>
        <taxon>Malpighiales</taxon>
        <taxon>Violaceae</taxon>
        <taxon>Pigea</taxon>
    </lineage>
</organism>
<comment type="function">
    <text evidence="2">Probably participates in a plant defense mechanism.</text>
</comment>
<comment type="tissue specificity">
    <text evidence="3">Detected in stems (at protein level).</text>
</comment>
<comment type="domain">
    <text evidence="5">The presence of a 'disulfide through disulfide knot' structurally defines this protein as a knottin.</text>
</comment>
<comment type="PTM">
    <text evidence="2">This is a cyclic peptide.</text>
</comment>
<comment type="mass spectrometry" mass="3144.2" method="MALDI" evidence="3"/>
<comment type="similarity">
    <text evidence="2">Belongs to the cyclotide family. Bracelet subfamily.</text>
</comment>
<comment type="caution">
    <text evidence="2">This peptide is cyclic. The start position was chosen by similarity to Oak1 (kalata B1) for which the DNA sequence is known.</text>
</comment>
<keyword id="KW-0903">Direct protein sequencing</keyword>
<keyword id="KW-1015">Disulfide bond</keyword>
<keyword id="KW-0960">Knottin</keyword>
<keyword id="KW-0611">Plant defense</keyword>